<proteinExistence type="inferred from homology"/>
<comment type="function">
    <text evidence="1">This is one of the proteins that bind and probably mediate the attachment of the 5S RNA into the large ribosomal subunit, where it forms part of the central protuberance.</text>
</comment>
<comment type="subunit">
    <text evidence="1">Part of the 50S ribosomal subunit; part of the 5S rRNA/L5/L18/L25 subcomplex. Contacts the 5S and 23S rRNAs.</text>
</comment>
<comment type="similarity">
    <text evidence="1">Belongs to the universal ribosomal protein uL18 family.</text>
</comment>
<dbReference type="EMBL" id="BX640422">
    <property type="protein sequence ID" value="CAE43889.1"/>
    <property type="molecule type" value="Genomic_DNA"/>
</dbReference>
<dbReference type="RefSeq" id="NP_882141.1">
    <property type="nucleotide sequence ID" value="NC_002929.2"/>
</dbReference>
<dbReference type="RefSeq" id="WP_003806922.1">
    <property type="nucleotide sequence ID" value="NZ_CP039022.1"/>
</dbReference>
<dbReference type="SMR" id="Q7VTB5"/>
<dbReference type="STRING" id="257313.BP3632"/>
<dbReference type="PaxDb" id="257313-BP3632"/>
<dbReference type="GeneID" id="93206277"/>
<dbReference type="KEGG" id="bpe:BP3632"/>
<dbReference type="PATRIC" id="fig|257313.5.peg.3929"/>
<dbReference type="eggNOG" id="COG0256">
    <property type="taxonomic scope" value="Bacteria"/>
</dbReference>
<dbReference type="HOGENOM" id="CLU_098841_0_1_4"/>
<dbReference type="Proteomes" id="UP000002676">
    <property type="component" value="Chromosome"/>
</dbReference>
<dbReference type="GO" id="GO:0022625">
    <property type="term" value="C:cytosolic large ribosomal subunit"/>
    <property type="evidence" value="ECO:0007669"/>
    <property type="project" value="TreeGrafter"/>
</dbReference>
<dbReference type="GO" id="GO:0008097">
    <property type="term" value="F:5S rRNA binding"/>
    <property type="evidence" value="ECO:0007669"/>
    <property type="project" value="TreeGrafter"/>
</dbReference>
<dbReference type="GO" id="GO:0003735">
    <property type="term" value="F:structural constituent of ribosome"/>
    <property type="evidence" value="ECO:0007669"/>
    <property type="project" value="InterPro"/>
</dbReference>
<dbReference type="GO" id="GO:0006412">
    <property type="term" value="P:translation"/>
    <property type="evidence" value="ECO:0007669"/>
    <property type="project" value="UniProtKB-UniRule"/>
</dbReference>
<dbReference type="CDD" id="cd00432">
    <property type="entry name" value="Ribosomal_L18_L5e"/>
    <property type="match status" value="1"/>
</dbReference>
<dbReference type="FunFam" id="3.30.420.100:FF:000001">
    <property type="entry name" value="50S ribosomal protein L18"/>
    <property type="match status" value="1"/>
</dbReference>
<dbReference type="Gene3D" id="3.30.420.100">
    <property type="match status" value="1"/>
</dbReference>
<dbReference type="HAMAP" id="MF_01337_B">
    <property type="entry name" value="Ribosomal_uL18_B"/>
    <property type="match status" value="1"/>
</dbReference>
<dbReference type="InterPro" id="IPR004389">
    <property type="entry name" value="Ribosomal_uL18_bac-type"/>
</dbReference>
<dbReference type="InterPro" id="IPR005484">
    <property type="entry name" value="Ribosomal_uL18_bac/euk"/>
</dbReference>
<dbReference type="NCBIfam" id="TIGR00060">
    <property type="entry name" value="L18_bact"/>
    <property type="match status" value="1"/>
</dbReference>
<dbReference type="PANTHER" id="PTHR12899">
    <property type="entry name" value="39S RIBOSOMAL PROTEIN L18, MITOCHONDRIAL"/>
    <property type="match status" value="1"/>
</dbReference>
<dbReference type="PANTHER" id="PTHR12899:SF3">
    <property type="entry name" value="LARGE RIBOSOMAL SUBUNIT PROTEIN UL18M"/>
    <property type="match status" value="1"/>
</dbReference>
<dbReference type="Pfam" id="PF00861">
    <property type="entry name" value="Ribosomal_L18p"/>
    <property type="match status" value="1"/>
</dbReference>
<dbReference type="SUPFAM" id="SSF53137">
    <property type="entry name" value="Translational machinery components"/>
    <property type="match status" value="1"/>
</dbReference>
<accession>Q7VTB5</accession>
<evidence type="ECO:0000255" key="1">
    <source>
        <dbReference type="HAMAP-Rule" id="MF_01337"/>
    </source>
</evidence>
<evidence type="ECO:0000305" key="2"/>
<keyword id="KW-1185">Reference proteome</keyword>
<keyword id="KW-0687">Ribonucleoprotein</keyword>
<keyword id="KW-0689">Ribosomal protein</keyword>
<keyword id="KW-0694">RNA-binding</keyword>
<keyword id="KW-0699">rRNA-binding</keyword>
<organism>
    <name type="scientific">Bordetella pertussis (strain Tohama I / ATCC BAA-589 / NCTC 13251)</name>
    <dbReference type="NCBI Taxonomy" id="257313"/>
    <lineage>
        <taxon>Bacteria</taxon>
        <taxon>Pseudomonadati</taxon>
        <taxon>Pseudomonadota</taxon>
        <taxon>Betaproteobacteria</taxon>
        <taxon>Burkholderiales</taxon>
        <taxon>Alcaligenaceae</taxon>
        <taxon>Bordetella</taxon>
    </lineage>
</organism>
<gene>
    <name evidence="1" type="primary">rplR</name>
    <name type="ordered locus">BP3632</name>
</gene>
<name>RL18_BORPE</name>
<protein>
    <recommendedName>
        <fullName evidence="1">Large ribosomal subunit protein uL18</fullName>
    </recommendedName>
    <alternativeName>
        <fullName evidence="2">50S ribosomal protein L18</fullName>
    </alternativeName>
</protein>
<sequence>MDKKVSRLRRAVPTRRKIAQLRVHRLSVFRSNLHIYANIISPEGDRVLVSASTLEAEVRAQLGGAGKGGNATAAALVGKRVAEKAKAAGIELVAFDRSGFRYHGRVKALAEAAREAGLKF</sequence>
<feature type="chain" id="PRO_0000131226" description="Large ribosomal subunit protein uL18">
    <location>
        <begin position="1"/>
        <end position="120"/>
    </location>
</feature>
<reference key="1">
    <citation type="journal article" date="2003" name="Nat. Genet.">
        <title>Comparative analysis of the genome sequences of Bordetella pertussis, Bordetella parapertussis and Bordetella bronchiseptica.</title>
        <authorList>
            <person name="Parkhill J."/>
            <person name="Sebaihia M."/>
            <person name="Preston A."/>
            <person name="Murphy L.D."/>
            <person name="Thomson N.R."/>
            <person name="Harris D.E."/>
            <person name="Holden M.T.G."/>
            <person name="Churcher C.M."/>
            <person name="Bentley S.D."/>
            <person name="Mungall K.L."/>
            <person name="Cerdeno-Tarraga A.-M."/>
            <person name="Temple L."/>
            <person name="James K.D."/>
            <person name="Harris B."/>
            <person name="Quail M.A."/>
            <person name="Achtman M."/>
            <person name="Atkin R."/>
            <person name="Baker S."/>
            <person name="Basham D."/>
            <person name="Bason N."/>
            <person name="Cherevach I."/>
            <person name="Chillingworth T."/>
            <person name="Collins M."/>
            <person name="Cronin A."/>
            <person name="Davis P."/>
            <person name="Doggett J."/>
            <person name="Feltwell T."/>
            <person name="Goble A."/>
            <person name="Hamlin N."/>
            <person name="Hauser H."/>
            <person name="Holroyd S."/>
            <person name="Jagels K."/>
            <person name="Leather S."/>
            <person name="Moule S."/>
            <person name="Norberczak H."/>
            <person name="O'Neil S."/>
            <person name="Ormond D."/>
            <person name="Price C."/>
            <person name="Rabbinowitsch E."/>
            <person name="Rutter S."/>
            <person name="Sanders M."/>
            <person name="Saunders D."/>
            <person name="Seeger K."/>
            <person name="Sharp S."/>
            <person name="Simmonds M."/>
            <person name="Skelton J."/>
            <person name="Squares R."/>
            <person name="Squares S."/>
            <person name="Stevens K."/>
            <person name="Unwin L."/>
            <person name="Whitehead S."/>
            <person name="Barrell B.G."/>
            <person name="Maskell D.J."/>
        </authorList>
    </citation>
    <scope>NUCLEOTIDE SEQUENCE [LARGE SCALE GENOMIC DNA]</scope>
    <source>
        <strain>Tohama I / ATCC BAA-589 / NCTC 13251</strain>
    </source>
</reference>